<evidence type="ECO:0000250" key="1"/>
<evidence type="ECO:0000250" key="2">
    <source>
        <dbReference type="UniProtKB" id="Q9Y2T4"/>
    </source>
</evidence>
<evidence type="ECO:0000305" key="3"/>
<reference key="1">
    <citation type="journal article" date="1994" name="Biochemistry">
        <title>Diversity in the regulatory B-subunits of protein phosphatase 2A: identification of a novel isoform highly expressed in brain.</title>
        <authorList>
            <person name="Zolnierowicz S."/>
            <person name="Csortos C."/>
            <person name="Bondor J."/>
            <person name="Verin A."/>
            <person name="Mumby M.C."/>
            <person name="Depaoli-Roach A.A."/>
        </authorList>
    </citation>
    <scope>NUCLEOTIDE SEQUENCE [MRNA]</scope>
    <source>
        <strain>New Zealand white</strain>
        <tissue>Brain</tissue>
        <tissue>Skeletal muscle</tissue>
    </source>
</reference>
<name>2ABG_RABIT</name>
<feature type="chain" id="PRO_0000071431" description="Serine/threonine-protein phosphatase 2A 55 kDa regulatory subunit B gamma isoform">
    <location>
        <begin position="1"/>
        <end position="447"/>
    </location>
</feature>
<feature type="repeat" description="WD 1">
    <location>
        <begin position="22"/>
        <end position="61"/>
    </location>
</feature>
<feature type="repeat" description="WD 2">
    <location>
        <begin position="87"/>
        <end position="128"/>
    </location>
</feature>
<feature type="repeat" description="WD 3">
    <location>
        <begin position="171"/>
        <end position="209"/>
    </location>
</feature>
<feature type="repeat" description="WD 4">
    <location>
        <begin position="220"/>
        <end position="260"/>
    </location>
</feature>
<feature type="repeat" description="WD 5">
    <location>
        <begin position="279"/>
        <end position="317"/>
    </location>
</feature>
<feature type="repeat" description="WD 6">
    <location>
        <begin position="334"/>
        <end position="375"/>
    </location>
</feature>
<feature type="repeat" description="WD 7">
    <location>
        <begin position="410"/>
        <end position="446"/>
    </location>
</feature>
<gene>
    <name type="primary">PPP2R2C</name>
</gene>
<organism>
    <name type="scientific">Oryctolagus cuniculus</name>
    <name type="common">Rabbit</name>
    <dbReference type="NCBI Taxonomy" id="9986"/>
    <lineage>
        <taxon>Eukaryota</taxon>
        <taxon>Metazoa</taxon>
        <taxon>Chordata</taxon>
        <taxon>Craniata</taxon>
        <taxon>Vertebrata</taxon>
        <taxon>Euteleostomi</taxon>
        <taxon>Mammalia</taxon>
        <taxon>Eutheria</taxon>
        <taxon>Euarchontoglires</taxon>
        <taxon>Glires</taxon>
        <taxon>Lagomorpha</taxon>
        <taxon>Leporidae</taxon>
        <taxon>Oryctolagus</taxon>
    </lineage>
</organism>
<proteinExistence type="evidence at transcript level"/>
<sequence>MGEDTDTRKINHSFLRDHSYVTEADIISTVEFNHTGELLATGDKGGRVVIFQREPESKNAPHSQGEYDVYSTFQSHEPEFDYLKSLEIEEKINKIKWLPQQNAAHSLLSTNDKTIKLWKITERDKRPEGYNLKDEEGKLKDLSTVTSLQVPVLKPMDLMVEVSPRRIFANGHTYHINSISVNSDCETYMSADDLRINLWHLAVTDRSFNIVDIKPANMEDLTEVITASEFHPHHCNLFVYSSSKGSLRLCDMRAAALCDKHSKLFEEPEDPSNRSFFSEIISSVSDVKFSHSGRYMLTRDYLTVKVWDLNMEARPIETYQVHDYLRSKLCSLYENDCIFDKFECAWNGSDSVIMTGAYNNFFRMFDRNTKRDVTLEASRESSKPRAVLKPRRVCVGGKRRRDDISVDSLDFTKKILHTAWHPAENIIAIAATNNLYIFQDKVNSDVH</sequence>
<keyword id="KW-1185">Reference proteome</keyword>
<keyword id="KW-0677">Repeat</keyword>
<keyword id="KW-0853">WD repeat</keyword>
<protein>
    <recommendedName>
        <fullName>Serine/threonine-protein phosphatase 2A 55 kDa regulatory subunit B gamma isoform</fullName>
    </recommendedName>
    <alternativeName>
        <fullName>PP2A subunit B isoform B55-gamma</fullName>
    </alternativeName>
    <alternativeName>
        <fullName>PP2A subunit B isoform PR55-gamma</fullName>
    </alternativeName>
    <alternativeName>
        <fullName>PP2A subunit B isoform R2-gamma</fullName>
    </alternativeName>
    <alternativeName>
        <fullName>PP2A subunit B isoform gamma</fullName>
    </alternativeName>
</protein>
<dbReference type="EMBL" id="U09355">
    <property type="protein sequence ID" value="AAA58956.1"/>
    <property type="molecule type" value="mRNA"/>
</dbReference>
<dbReference type="EMBL" id="U09354">
    <property type="protein sequence ID" value="AAA58955.1"/>
    <property type="molecule type" value="mRNA"/>
</dbReference>
<dbReference type="PIR" id="A55836">
    <property type="entry name" value="A55836"/>
</dbReference>
<dbReference type="RefSeq" id="NP_001164547.1">
    <property type="nucleotide sequence ID" value="NM_001171076.1"/>
</dbReference>
<dbReference type="SMR" id="P50410"/>
<dbReference type="FunCoup" id="P50410">
    <property type="interactions" value="121"/>
</dbReference>
<dbReference type="GeneID" id="100328617"/>
<dbReference type="KEGG" id="ocu:100328617"/>
<dbReference type="CTD" id="5522"/>
<dbReference type="InParanoid" id="P50410"/>
<dbReference type="OrthoDB" id="6274823at2759"/>
<dbReference type="Proteomes" id="UP000001811">
    <property type="component" value="Unplaced"/>
</dbReference>
<dbReference type="GO" id="GO:0000159">
    <property type="term" value="C:protein phosphatase type 2A complex"/>
    <property type="evidence" value="ECO:0007669"/>
    <property type="project" value="InterPro"/>
</dbReference>
<dbReference type="GO" id="GO:0019888">
    <property type="term" value="F:protein phosphatase regulator activity"/>
    <property type="evidence" value="ECO:0007669"/>
    <property type="project" value="InterPro"/>
</dbReference>
<dbReference type="FunFam" id="2.130.10.10:FF:000002">
    <property type="entry name" value="Serine/threonine-protein phosphatase 2A 55 kDa regulatory subunit B"/>
    <property type="match status" value="1"/>
</dbReference>
<dbReference type="Gene3D" id="2.130.10.10">
    <property type="entry name" value="YVTN repeat-like/Quinoprotein amine dehydrogenase"/>
    <property type="match status" value="1"/>
</dbReference>
<dbReference type="InterPro" id="IPR000009">
    <property type="entry name" value="PP2A_PR55"/>
</dbReference>
<dbReference type="InterPro" id="IPR018067">
    <property type="entry name" value="PP2A_PR55_CS"/>
</dbReference>
<dbReference type="InterPro" id="IPR015943">
    <property type="entry name" value="WD40/YVTN_repeat-like_dom_sf"/>
</dbReference>
<dbReference type="InterPro" id="IPR036322">
    <property type="entry name" value="WD40_repeat_dom_sf"/>
</dbReference>
<dbReference type="InterPro" id="IPR001680">
    <property type="entry name" value="WD40_rpt"/>
</dbReference>
<dbReference type="PANTHER" id="PTHR11871">
    <property type="entry name" value="PROTEIN PHOSPHATASE PP2A REGULATORY SUBUNIT B"/>
    <property type="match status" value="1"/>
</dbReference>
<dbReference type="PIRSF" id="PIRSF037309">
    <property type="entry name" value="PP2A_PR55"/>
    <property type="match status" value="1"/>
</dbReference>
<dbReference type="PRINTS" id="PR00600">
    <property type="entry name" value="PP2APR55"/>
</dbReference>
<dbReference type="SMART" id="SM00320">
    <property type="entry name" value="WD40"/>
    <property type="match status" value="6"/>
</dbReference>
<dbReference type="SUPFAM" id="SSF50978">
    <property type="entry name" value="WD40 repeat-like"/>
    <property type="match status" value="1"/>
</dbReference>
<dbReference type="PROSITE" id="PS01024">
    <property type="entry name" value="PR55_1"/>
    <property type="match status" value="1"/>
</dbReference>
<dbReference type="PROSITE" id="PS01025">
    <property type="entry name" value="PR55_2"/>
    <property type="match status" value="1"/>
</dbReference>
<accession>P50410</accession>
<comment type="function">
    <text>The B regulatory subunit might modulate substrate selectivity and catalytic activity, and might also direct the localization of the catalytic enzyme to a particular subcellular compartment.</text>
</comment>
<comment type="subunit">
    <text evidence="1 2">PP2A consists of a common heterodimeric core enzyme, composed of a 36 kDa catalytic subunit (subunit C) and a 65 kDa constant regulatory subunit (PR65 or subunit A), that associates with a variety of regulatory subunits. Proteins that associate with the core dimer include three families of regulatory subunits B (the R2/B/PR55/B55, R3/B''/PR72/PR130/PR59 and R5/B'/B56 families), the 48 kDa variable regulatory subunit, viral proteins, and cell signaling molecules (By similarity). Interacts with IER5 (By similarity).</text>
</comment>
<comment type="tissue specificity">
    <text>Highly expressed in brain.</text>
</comment>
<comment type="similarity">
    <text evidence="3">Belongs to the phosphatase 2A regulatory subunit B family.</text>
</comment>